<feature type="chain" id="PRO_1000094549" description="3-dehydroquinate synthase">
    <location>
        <begin position="1"/>
        <end position="368"/>
    </location>
</feature>
<feature type="binding site" evidence="1">
    <location>
        <begin position="112"/>
        <end position="116"/>
    </location>
    <ligand>
        <name>NAD(+)</name>
        <dbReference type="ChEBI" id="CHEBI:57540"/>
    </ligand>
</feature>
<feature type="binding site" evidence="1">
    <location>
        <begin position="136"/>
        <end position="137"/>
    </location>
    <ligand>
        <name>NAD(+)</name>
        <dbReference type="ChEBI" id="CHEBI:57540"/>
    </ligand>
</feature>
<feature type="binding site" evidence="1">
    <location>
        <position position="149"/>
    </location>
    <ligand>
        <name>NAD(+)</name>
        <dbReference type="ChEBI" id="CHEBI:57540"/>
    </ligand>
</feature>
<feature type="binding site" evidence="1">
    <location>
        <position position="158"/>
    </location>
    <ligand>
        <name>NAD(+)</name>
        <dbReference type="ChEBI" id="CHEBI:57540"/>
    </ligand>
</feature>
<feature type="binding site" evidence="1">
    <location>
        <begin position="176"/>
        <end position="179"/>
    </location>
    <ligand>
        <name>NAD(+)</name>
        <dbReference type="ChEBI" id="CHEBI:57540"/>
    </ligand>
</feature>
<feature type="binding site" evidence="1">
    <location>
        <position position="191"/>
    </location>
    <ligand>
        <name>Zn(2+)</name>
        <dbReference type="ChEBI" id="CHEBI:29105"/>
    </ligand>
</feature>
<feature type="binding site" evidence="1">
    <location>
        <position position="257"/>
    </location>
    <ligand>
        <name>Zn(2+)</name>
        <dbReference type="ChEBI" id="CHEBI:29105"/>
    </ligand>
</feature>
<feature type="binding site" evidence="1">
    <location>
        <position position="274"/>
    </location>
    <ligand>
        <name>Zn(2+)</name>
        <dbReference type="ChEBI" id="CHEBI:29105"/>
    </ligand>
</feature>
<name>AROB_NATTJ</name>
<accession>B2A259</accession>
<keyword id="KW-0028">Amino-acid biosynthesis</keyword>
<keyword id="KW-0057">Aromatic amino acid biosynthesis</keyword>
<keyword id="KW-0170">Cobalt</keyword>
<keyword id="KW-0963">Cytoplasm</keyword>
<keyword id="KW-0456">Lyase</keyword>
<keyword id="KW-0479">Metal-binding</keyword>
<keyword id="KW-0520">NAD</keyword>
<keyword id="KW-0547">Nucleotide-binding</keyword>
<keyword id="KW-1185">Reference proteome</keyword>
<keyword id="KW-0862">Zinc</keyword>
<reference key="1">
    <citation type="submission" date="2008-04" db="EMBL/GenBank/DDBJ databases">
        <title>Complete sequence of chromosome of Natranaerobius thermophilus JW/NM-WN-LF.</title>
        <authorList>
            <consortium name="US DOE Joint Genome Institute"/>
            <person name="Copeland A."/>
            <person name="Lucas S."/>
            <person name="Lapidus A."/>
            <person name="Glavina del Rio T."/>
            <person name="Dalin E."/>
            <person name="Tice H."/>
            <person name="Bruce D."/>
            <person name="Goodwin L."/>
            <person name="Pitluck S."/>
            <person name="Chertkov O."/>
            <person name="Brettin T."/>
            <person name="Detter J.C."/>
            <person name="Han C."/>
            <person name="Kuske C.R."/>
            <person name="Schmutz J."/>
            <person name="Larimer F."/>
            <person name="Land M."/>
            <person name="Hauser L."/>
            <person name="Kyrpides N."/>
            <person name="Lykidis A."/>
            <person name="Mesbah N.M."/>
            <person name="Wiegel J."/>
        </authorList>
    </citation>
    <scope>NUCLEOTIDE SEQUENCE [LARGE SCALE GENOMIC DNA]</scope>
    <source>
        <strain>ATCC BAA-1301 / DSM 18059 / JW/NM-WN-LF</strain>
    </source>
</reference>
<comment type="function">
    <text evidence="1">Catalyzes the conversion of 3-deoxy-D-arabino-heptulosonate 7-phosphate (DAHP) to dehydroquinate (DHQ).</text>
</comment>
<comment type="catalytic activity">
    <reaction evidence="1">
        <text>7-phospho-2-dehydro-3-deoxy-D-arabino-heptonate = 3-dehydroquinate + phosphate</text>
        <dbReference type="Rhea" id="RHEA:21968"/>
        <dbReference type="ChEBI" id="CHEBI:32364"/>
        <dbReference type="ChEBI" id="CHEBI:43474"/>
        <dbReference type="ChEBI" id="CHEBI:58394"/>
        <dbReference type="EC" id="4.2.3.4"/>
    </reaction>
</comment>
<comment type="cofactor">
    <cofactor evidence="1">
        <name>Co(2+)</name>
        <dbReference type="ChEBI" id="CHEBI:48828"/>
    </cofactor>
    <cofactor evidence="1">
        <name>Zn(2+)</name>
        <dbReference type="ChEBI" id="CHEBI:29105"/>
    </cofactor>
    <text evidence="1">Binds 1 divalent metal cation per subunit. Can use either Co(2+) or Zn(2+).</text>
</comment>
<comment type="cofactor">
    <cofactor evidence="1">
        <name>NAD(+)</name>
        <dbReference type="ChEBI" id="CHEBI:57540"/>
    </cofactor>
</comment>
<comment type="pathway">
    <text evidence="1">Metabolic intermediate biosynthesis; chorismate biosynthesis; chorismate from D-erythrose 4-phosphate and phosphoenolpyruvate: step 2/7.</text>
</comment>
<comment type="subcellular location">
    <subcellularLocation>
        <location evidence="1">Cytoplasm</location>
    </subcellularLocation>
</comment>
<comment type="similarity">
    <text evidence="1">Belongs to the sugar phosphate cyclases superfamily. Dehydroquinate synthase family.</text>
</comment>
<dbReference type="EC" id="4.2.3.4" evidence="1"/>
<dbReference type="EMBL" id="CP001034">
    <property type="protein sequence ID" value="ACB84864.1"/>
    <property type="molecule type" value="Genomic_DNA"/>
</dbReference>
<dbReference type="RefSeq" id="WP_012447739.1">
    <property type="nucleotide sequence ID" value="NC_010718.1"/>
</dbReference>
<dbReference type="SMR" id="B2A259"/>
<dbReference type="FunCoup" id="B2A259">
    <property type="interactions" value="393"/>
</dbReference>
<dbReference type="STRING" id="457570.Nther_1281"/>
<dbReference type="KEGG" id="nth:Nther_1281"/>
<dbReference type="eggNOG" id="COG0337">
    <property type="taxonomic scope" value="Bacteria"/>
</dbReference>
<dbReference type="HOGENOM" id="CLU_001201_0_2_9"/>
<dbReference type="InParanoid" id="B2A259"/>
<dbReference type="OrthoDB" id="9806583at2"/>
<dbReference type="UniPathway" id="UPA00053">
    <property type="reaction ID" value="UER00085"/>
</dbReference>
<dbReference type="Proteomes" id="UP000001683">
    <property type="component" value="Chromosome"/>
</dbReference>
<dbReference type="GO" id="GO:0005737">
    <property type="term" value="C:cytoplasm"/>
    <property type="evidence" value="ECO:0007669"/>
    <property type="project" value="UniProtKB-SubCell"/>
</dbReference>
<dbReference type="GO" id="GO:0003856">
    <property type="term" value="F:3-dehydroquinate synthase activity"/>
    <property type="evidence" value="ECO:0007669"/>
    <property type="project" value="UniProtKB-UniRule"/>
</dbReference>
<dbReference type="GO" id="GO:0046872">
    <property type="term" value="F:metal ion binding"/>
    <property type="evidence" value="ECO:0007669"/>
    <property type="project" value="UniProtKB-KW"/>
</dbReference>
<dbReference type="GO" id="GO:0000166">
    <property type="term" value="F:nucleotide binding"/>
    <property type="evidence" value="ECO:0007669"/>
    <property type="project" value="UniProtKB-KW"/>
</dbReference>
<dbReference type="GO" id="GO:0008652">
    <property type="term" value="P:amino acid biosynthetic process"/>
    <property type="evidence" value="ECO:0007669"/>
    <property type="project" value="UniProtKB-KW"/>
</dbReference>
<dbReference type="GO" id="GO:0009073">
    <property type="term" value="P:aromatic amino acid family biosynthetic process"/>
    <property type="evidence" value="ECO:0007669"/>
    <property type="project" value="UniProtKB-KW"/>
</dbReference>
<dbReference type="GO" id="GO:0009423">
    <property type="term" value="P:chorismate biosynthetic process"/>
    <property type="evidence" value="ECO:0007669"/>
    <property type="project" value="UniProtKB-UniRule"/>
</dbReference>
<dbReference type="CDD" id="cd08195">
    <property type="entry name" value="DHQS"/>
    <property type="match status" value="1"/>
</dbReference>
<dbReference type="FunFam" id="3.40.50.1970:FF:000007">
    <property type="entry name" value="Pentafunctional AROM polypeptide"/>
    <property type="match status" value="1"/>
</dbReference>
<dbReference type="Gene3D" id="3.40.50.1970">
    <property type="match status" value="1"/>
</dbReference>
<dbReference type="Gene3D" id="1.20.1090.10">
    <property type="entry name" value="Dehydroquinate synthase-like - alpha domain"/>
    <property type="match status" value="1"/>
</dbReference>
<dbReference type="HAMAP" id="MF_00110">
    <property type="entry name" value="DHQ_synthase"/>
    <property type="match status" value="1"/>
</dbReference>
<dbReference type="InterPro" id="IPR050071">
    <property type="entry name" value="Dehydroquinate_synthase"/>
</dbReference>
<dbReference type="InterPro" id="IPR016037">
    <property type="entry name" value="DHQ_synth_AroB"/>
</dbReference>
<dbReference type="InterPro" id="IPR030963">
    <property type="entry name" value="DHQ_synth_fam"/>
</dbReference>
<dbReference type="InterPro" id="IPR030960">
    <property type="entry name" value="DHQS/DOIS_N"/>
</dbReference>
<dbReference type="InterPro" id="IPR056179">
    <property type="entry name" value="DHQS_C"/>
</dbReference>
<dbReference type="NCBIfam" id="TIGR01357">
    <property type="entry name" value="aroB"/>
    <property type="match status" value="1"/>
</dbReference>
<dbReference type="PANTHER" id="PTHR43622">
    <property type="entry name" value="3-DEHYDROQUINATE SYNTHASE"/>
    <property type="match status" value="1"/>
</dbReference>
<dbReference type="PANTHER" id="PTHR43622:SF7">
    <property type="entry name" value="3-DEHYDROQUINATE SYNTHASE, CHLOROPLASTIC"/>
    <property type="match status" value="1"/>
</dbReference>
<dbReference type="Pfam" id="PF01761">
    <property type="entry name" value="DHQ_synthase"/>
    <property type="match status" value="1"/>
</dbReference>
<dbReference type="Pfam" id="PF24621">
    <property type="entry name" value="DHQS_C"/>
    <property type="match status" value="1"/>
</dbReference>
<dbReference type="PIRSF" id="PIRSF001455">
    <property type="entry name" value="DHQ_synth"/>
    <property type="match status" value="1"/>
</dbReference>
<dbReference type="SUPFAM" id="SSF56796">
    <property type="entry name" value="Dehydroquinate synthase-like"/>
    <property type="match status" value="1"/>
</dbReference>
<organism>
    <name type="scientific">Natranaerobius thermophilus (strain ATCC BAA-1301 / DSM 18059 / JW/NM-WN-LF)</name>
    <dbReference type="NCBI Taxonomy" id="457570"/>
    <lineage>
        <taxon>Bacteria</taxon>
        <taxon>Bacillati</taxon>
        <taxon>Bacillota</taxon>
        <taxon>Clostridia</taxon>
        <taxon>Natranaerobiales</taxon>
        <taxon>Natranaerobiaceae</taxon>
        <taxon>Natranaerobius</taxon>
    </lineage>
</organism>
<proteinExistence type="inferred from homology"/>
<gene>
    <name evidence="1" type="primary">aroB</name>
    <name type="ordered locus">Nther_1281</name>
</gene>
<sequence>MKNKFDTLTVETGVKSKKKYPIYIGKAILNLLDKVIPRNVSVLIVIDSRIARLHRDKITRLIEFLTESRTVNQIIIPGEEDSKSLSVSESLYEKAASLNLDRSSWFIGIGGGVVGDLTGFVAATYMRGANLLHVPTTLLAQVDSSVGGKVAINQSGYKNLVGNFYQPKAVIIDTNFLDTLPIRELRAGLAEVFKYGILCDRELFLTVKSLFEDCEPLNNVSWERYSYLIHKSCEIKADIVSQDEIDTGIRMLLNLGHTFAHALEGATSYNYFKHGEAVMWGLAMSAELSYKLNKLTYKDYQAIAELPELTKVPEVPIQVKDPNIIEELLLRDKKKTGEELTVILPTSIGSAEICKCPATALIKVILES</sequence>
<evidence type="ECO:0000255" key="1">
    <source>
        <dbReference type="HAMAP-Rule" id="MF_00110"/>
    </source>
</evidence>
<protein>
    <recommendedName>
        <fullName evidence="1">3-dehydroquinate synthase</fullName>
        <shortName evidence="1">DHQS</shortName>
        <ecNumber evidence="1">4.2.3.4</ecNumber>
    </recommendedName>
</protein>